<proteinExistence type="evidence at protein level"/>
<sequence length="100" mass="11223">MIFMRKVVAEVSIIPLGKGASVSKYVKKAIEVFKKYDLKVETNAMGTVLEGDLDEILKAFKEAHSTVLNDVDRVVSSLKIDERKDKENTIERKLKAIGEL</sequence>
<accession>Q58452</accession>
<organism>
    <name type="scientific">Methanocaldococcus jannaschii (strain ATCC 43067 / DSM 2661 / JAL-1 / JCM 10045 / NBRC 100440)</name>
    <name type="common">Methanococcus jannaschii</name>
    <dbReference type="NCBI Taxonomy" id="243232"/>
    <lineage>
        <taxon>Archaea</taxon>
        <taxon>Methanobacteriati</taxon>
        <taxon>Methanobacteriota</taxon>
        <taxon>Methanomada group</taxon>
        <taxon>Methanococci</taxon>
        <taxon>Methanococcales</taxon>
        <taxon>Methanocaldococcaceae</taxon>
        <taxon>Methanocaldococcus</taxon>
    </lineage>
</organism>
<gene>
    <name type="ordered locus">MJ1052</name>
</gene>
<reference key="1">
    <citation type="journal article" date="1996" name="Science">
        <title>Complete genome sequence of the methanogenic archaeon, Methanococcus jannaschii.</title>
        <authorList>
            <person name="Bult C.J."/>
            <person name="White O."/>
            <person name="Olsen G.J."/>
            <person name="Zhou L."/>
            <person name="Fleischmann R.D."/>
            <person name="Sutton G.G."/>
            <person name="Blake J.A."/>
            <person name="FitzGerald L.M."/>
            <person name="Clayton R.A."/>
            <person name="Gocayne J.D."/>
            <person name="Kerlavage A.R."/>
            <person name="Dougherty B.A."/>
            <person name="Tomb J.-F."/>
            <person name="Adams M.D."/>
            <person name="Reich C.I."/>
            <person name="Overbeek R."/>
            <person name="Kirkness E.F."/>
            <person name="Weinstock K.G."/>
            <person name="Merrick J.M."/>
            <person name="Glodek A."/>
            <person name="Scott J.L."/>
            <person name="Geoghagen N.S.M."/>
            <person name="Weidman J.F."/>
            <person name="Fuhrmann J.L."/>
            <person name="Nguyen D."/>
            <person name="Utterback T.R."/>
            <person name="Kelley J.M."/>
            <person name="Peterson J.D."/>
            <person name="Sadow P.W."/>
            <person name="Hanna M.C."/>
            <person name="Cotton M.D."/>
            <person name="Roberts K.M."/>
            <person name="Hurst M.A."/>
            <person name="Kaine B.P."/>
            <person name="Borodovsky M."/>
            <person name="Klenk H.-P."/>
            <person name="Fraser C.M."/>
            <person name="Smith H.O."/>
            <person name="Woese C.R."/>
            <person name="Venter J.C."/>
        </authorList>
    </citation>
    <scope>NUCLEOTIDE SEQUENCE [LARGE SCALE GENOMIC DNA]</scope>
    <source>
        <strain>ATCC 43067 / DSM 2661 / JAL-1 / JCM 10045 / NBRC 100440</strain>
    </source>
</reference>
<dbReference type="EMBL" id="L77117">
    <property type="protein sequence ID" value="AAB99055.1"/>
    <property type="molecule type" value="Genomic_DNA"/>
</dbReference>
<dbReference type="PIR" id="C64431">
    <property type="entry name" value="C64431"/>
</dbReference>
<dbReference type="PDB" id="2EKY">
    <property type="method" value="X-ray"/>
    <property type="resolution" value="1.80 A"/>
    <property type="chains" value="A/B/C/D/E/F/G/H=1-100"/>
</dbReference>
<dbReference type="PDB" id="2EPI">
    <property type="method" value="X-ray"/>
    <property type="resolution" value="1.70 A"/>
    <property type="chains" value="A/B/C/D=1-100"/>
</dbReference>
<dbReference type="PDBsum" id="2EKY"/>
<dbReference type="PDBsum" id="2EPI"/>
<dbReference type="SMR" id="Q58452"/>
<dbReference type="STRING" id="243232.MJ_1052"/>
<dbReference type="PaxDb" id="243232-MJ_1052"/>
<dbReference type="EnsemblBacteria" id="AAB99055">
    <property type="protein sequence ID" value="AAB99055"/>
    <property type="gene ID" value="MJ_1052"/>
</dbReference>
<dbReference type="KEGG" id="mja:MJ_1052"/>
<dbReference type="eggNOG" id="arCOG04373">
    <property type="taxonomic scope" value="Archaea"/>
</dbReference>
<dbReference type="HOGENOM" id="CLU_137479_1_2_2"/>
<dbReference type="InParanoid" id="Q58452"/>
<dbReference type="PhylomeDB" id="Q58452"/>
<dbReference type="EvolutionaryTrace" id="Q58452"/>
<dbReference type="Proteomes" id="UP000000805">
    <property type="component" value="Chromosome"/>
</dbReference>
<dbReference type="Gene3D" id="3.30.70.930">
    <property type="match status" value="1"/>
</dbReference>
<dbReference type="InterPro" id="IPR029756">
    <property type="entry name" value="MTH1187/YkoF-like"/>
</dbReference>
<dbReference type="InterPro" id="IPR002767">
    <property type="entry name" value="Thiamine_BP"/>
</dbReference>
<dbReference type="InterPro" id="IPR051614">
    <property type="entry name" value="UPF0045_domain"/>
</dbReference>
<dbReference type="NCBIfam" id="TIGR00106">
    <property type="entry name" value="MTH1187 family thiamine-binding protein"/>
    <property type="match status" value="1"/>
</dbReference>
<dbReference type="PANTHER" id="PTHR33777">
    <property type="entry name" value="UPF0045 PROTEIN ECM15"/>
    <property type="match status" value="1"/>
</dbReference>
<dbReference type="PANTHER" id="PTHR33777:SF1">
    <property type="entry name" value="UPF0045 PROTEIN ECM15"/>
    <property type="match status" value="1"/>
</dbReference>
<dbReference type="Pfam" id="PF01910">
    <property type="entry name" value="Thiamine_BP"/>
    <property type="match status" value="1"/>
</dbReference>
<dbReference type="SUPFAM" id="SSF89957">
    <property type="entry name" value="MTH1187/YkoF-like"/>
    <property type="match status" value="1"/>
</dbReference>
<name>Y1052_METJA</name>
<comment type="similarity">
    <text evidence="1">Belongs to the UPF0045 family.</text>
</comment>
<evidence type="ECO:0000305" key="1"/>
<evidence type="ECO:0007829" key="2">
    <source>
        <dbReference type="PDB" id="2EPI"/>
    </source>
</evidence>
<feature type="chain" id="PRO_0000147628" description="UPF0045 protein MJ1052">
    <location>
        <begin position="1"/>
        <end position="100"/>
    </location>
</feature>
<feature type="strand" evidence="2">
    <location>
        <begin position="6"/>
        <end position="16"/>
    </location>
</feature>
<feature type="strand" evidence="2">
    <location>
        <begin position="18"/>
        <end position="20"/>
    </location>
</feature>
<feature type="helix" evidence="2">
    <location>
        <begin position="23"/>
        <end position="33"/>
    </location>
</feature>
<feature type="strand" evidence="2">
    <location>
        <begin position="39"/>
        <end position="43"/>
    </location>
</feature>
<feature type="strand" evidence="2">
    <location>
        <begin position="46"/>
        <end position="52"/>
    </location>
</feature>
<feature type="helix" evidence="2">
    <location>
        <begin position="53"/>
        <end position="68"/>
    </location>
</feature>
<feature type="strand" evidence="2">
    <location>
        <begin position="71"/>
        <end position="86"/>
    </location>
</feature>
<feature type="helix" evidence="2">
    <location>
        <begin position="90"/>
        <end position="96"/>
    </location>
</feature>
<protein>
    <recommendedName>
        <fullName>UPF0045 protein MJ1052</fullName>
    </recommendedName>
</protein>
<keyword id="KW-0002">3D-structure</keyword>
<keyword id="KW-1185">Reference proteome</keyword>